<protein>
    <recommendedName>
        <fullName>Epithelial splicing regulatory protein 2</fullName>
    </recommendedName>
    <alternativeName>
        <fullName>RNA-binding motif protein 35B</fullName>
    </alternativeName>
    <alternativeName>
        <fullName>RNA-binding protein 35B</fullName>
    </alternativeName>
</protein>
<comment type="function">
    <text evidence="1">mRNA splicing factor that regulates the formation of epithelial cell-specific isoforms. Specifically regulates the expression of FGFR2-IIIb, an epithelial cell-specific isoform of FGFR2. Acts by directly binding specific sequences in mRNAs. Binds the GU-rich sequence motifs in the ISE/ISS-3, a cis-element regulatory region present in the mRNA of FGFR2 (By similarity).</text>
</comment>
<comment type="subcellular location">
    <subcellularLocation>
        <location evidence="1">Nucleus</location>
    </subcellularLocation>
</comment>
<comment type="similarity">
    <text evidence="3">Belongs to the ESRP family.</text>
</comment>
<accession>Q5ZLR4</accession>
<reference key="1">
    <citation type="journal article" date="2005" name="Genome Biol.">
        <title>Full-length cDNAs from chicken bursal lymphocytes to facilitate gene function analysis.</title>
        <authorList>
            <person name="Caldwell R.B."/>
            <person name="Kierzek A.M."/>
            <person name="Arakawa H."/>
            <person name="Bezzubov Y."/>
            <person name="Zaim J."/>
            <person name="Fiedler P."/>
            <person name="Kutter S."/>
            <person name="Blagodatski A."/>
            <person name="Kostovska D."/>
            <person name="Koter M."/>
            <person name="Plachy J."/>
            <person name="Carninci P."/>
            <person name="Hayashizaki Y."/>
            <person name="Buerstedde J.-M."/>
        </authorList>
    </citation>
    <scope>NUCLEOTIDE SEQUENCE [LARGE SCALE MRNA]</scope>
    <source>
        <strain>CB</strain>
        <tissue>Bursa of Fabricius</tissue>
    </source>
</reference>
<organism>
    <name type="scientific">Gallus gallus</name>
    <name type="common">Chicken</name>
    <dbReference type="NCBI Taxonomy" id="9031"/>
    <lineage>
        <taxon>Eukaryota</taxon>
        <taxon>Metazoa</taxon>
        <taxon>Chordata</taxon>
        <taxon>Craniata</taxon>
        <taxon>Vertebrata</taxon>
        <taxon>Euteleostomi</taxon>
        <taxon>Archelosauria</taxon>
        <taxon>Archosauria</taxon>
        <taxon>Dinosauria</taxon>
        <taxon>Saurischia</taxon>
        <taxon>Theropoda</taxon>
        <taxon>Coelurosauria</taxon>
        <taxon>Aves</taxon>
        <taxon>Neognathae</taxon>
        <taxon>Galloanserae</taxon>
        <taxon>Galliformes</taxon>
        <taxon>Phasianidae</taxon>
        <taxon>Phasianinae</taxon>
        <taxon>Gallus</taxon>
    </lineage>
</organism>
<keyword id="KW-0507">mRNA processing</keyword>
<keyword id="KW-0508">mRNA splicing</keyword>
<keyword id="KW-0539">Nucleus</keyword>
<keyword id="KW-1185">Reference proteome</keyword>
<keyword id="KW-0677">Repeat</keyword>
<keyword id="KW-0694">RNA-binding</keyword>
<feature type="chain" id="PRO_0000273052" description="Epithelial splicing regulatory protein 2">
    <location>
        <begin position="1"/>
        <end position="701"/>
    </location>
</feature>
<feature type="domain" description="RRM 1" evidence="2">
    <location>
        <begin position="226"/>
        <end position="303"/>
    </location>
</feature>
<feature type="domain" description="RRM 2" evidence="2">
    <location>
        <begin position="327"/>
        <end position="407"/>
    </location>
</feature>
<feature type="domain" description="RRM 3" evidence="2">
    <location>
        <begin position="448"/>
        <end position="523"/>
    </location>
</feature>
<evidence type="ECO:0000250" key="1"/>
<evidence type="ECO:0000255" key="2">
    <source>
        <dbReference type="PROSITE-ProRule" id="PRU00176"/>
    </source>
</evidence>
<evidence type="ECO:0000305" key="3"/>
<proteinExistence type="evidence at transcript level"/>
<dbReference type="EMBL" id="AJ719670">
    <property type="protein sequence ID" value="CAG31329.1"/>
    <property type="molecule type" value="mRNA"/>
</dbReference>
<dbReference type="RefSeq" id="NP_001025737.1">
    <property type="nucleotide sequence ID" value="NM_001030566.2"/>
</dbReference>
<dbReference type="SMR" id="Q5ZLR4"/>
<dbReference type="FunCoup" id="Q5ZLR4">
    <property type="interactions" value="417"/>
</dbReference>
<dbReference type="STRING" id="9031.ENSGALP00000055344"/>
<dbReference type="PaxDb" id="9031-ENSGALP00000005323"/>
<dbReference type="GeneID" id="415710"/>
<dbReference type="KEGG" id="gga:415710"/>
<dbReference type="CTD" id="80004"/>
<dbReference type="VEuPathDB" id="HostDB:geneid_415710"/>
<dbReference type="eggNOG" id="KOG1365">
    <property type="taxonomic scope" value="Eukaryota"/>
</dbReference>
<dbReference type="HOGENOM" id="CLU_008009_2_1_1"/>
<dbReference type="InParanoid" id="Q5ZLR4"/>
<dbReference type="OrthoDB" id="431068at2759"/>
<dbReference type="PhylomeDB" id="Q5ZLR4"/>
<dbReference type="TreeFam" id="TF316157"/>
<dbReference type="PRO" id="PR:Q5ZLR4"/>
<dbReference type="Proteomes" id="UP000000539">
    <property type="component" value="Chromosome 11"/>
</dbReference>
<dbReference type="Bgee" id="ENSGALG00000003374">
    <property type="expression patterns" value="Expressed in colon and 5 other cell types or tissues"/>
</dbReference>
<dbReference type="GO" id="GO:0005654">
    <property type="term" value="C:nucleoplasm"/>
    <property type="evidence" value="ECO:0000318"/>
    <property type="project" value="GO_Central"/>
</dbReference>
<dbReference type="GO" id="GO:0005634">
    <property type="term" value="C:nucleus"/>
    <property type="evidence" value="ECO:0000250"/>
    <property type="project" value="UniProtKB"/>
</dbReference>
<dbReference type="GO" id="GO:1990904">
    <property type="term" value="C:ribonucleoprotein complex"/>
    <property type="evidence" value="ECO:0000318"/>
    <property type="project" value="GO_Central"/>
</dbReference>
<dbReference type="GO" id="GO:0003729">
    <property type="term" value="F:mRNA binding"/>
    <property type="evidence" value="ECO:0000250"/>
    <property type="project" value="UniProtKB"/>
</dbReference>
<dbReference type="GO" id="GO:0006397">
    <property type="term" value="P:mRNA processing"/>
    <property type="evidence" value="ECO:0007669"/>
    <property type="project" value="UniProtKB-KW"/>
</dbReference>
<dbReference type="GO" id="GO:0043484">
    <property type="term" value="P:regulation of RNA splicing"/>
    <property type="evidence" value="ECO:0000250"/>
    <property type="project" value="UniProtKB"/>
</dbReference>
<dbReference type="GO" id="GO:0008380">
    <property type="term" value="P:RNA splicing"/>
    <property type="evidence" value="ECO:0007669"/>
    <property type="project" value="UniProtKB-KW"/>
</dbReference>
<dbReference type="CDD" id="cd12740">
    <property type="entry name" value="RRM2_ESRP2"/>
    <property type="match status" value="1"/>
</dbReference>
<dbReference type="CDD" id="cd12742">
    <property type="entry name" value="RRM3_ESRP1_ESRP2"/>
    <property type="match status" value="1"/>
</dbReference>
<dbReference type="FunFam" id="3.30.70.330:FF:000041">
    <property type="entry name" value="Epithelial splicing regulatory protein 1"/>
    <property type="match status" value="1"/>
</dbReference>
<dbReference type="FunFam" id="3.30.70.330:FF:000070">
    <property type="entry name" value="Epithelial splicing regulatory protein 1"/>
    <property type="match status" value="1"/>
</dbReference>
<dbReference type="FunFam" id="3.30.70.330:FF:000056">
    <property type="entry name" value="epithelial splicing regulatory protein 1 isoform X1"/>
    <property type="match status" value="1"/>
</dbReference>
<dbReference type="FunFam" id="3.30.420.10:FF:000037">
    <property type="entry name" value="epithelial splicing regulatory protein 2 isoform X1"/>
    <property type="match status" value="1"/>
</dbReference>
<dbReference type="Gene3D" id="3.30.70.330">
    <property type="match status" value="3"/>
</dbReference>
<dbReference type="Gene3D" id="3.30.420.10">
    <property type="entry name" value="Ribonuclease H-like superfamily/Ribonuclease H"/>
    <property type="match status" value="1"/>
</dbReference>
<dbReference type="InterPro" id="IPR050666">
    <property type="entry name" value="ESRP"/>
</dbReference>
<dbReference type="InterPro" id="IPR012677">
    <property type="entry name" value="Nucleotide-bd_a/b_plait_sf"/>
</dbReference>
<dbReference type="InterPro" id="IPR035979">
    <property type="entry name" value="RBD_domain_sf"/>
</dbReference>
<dbReference type="InterPro" id="IPR012337">
    <property type="entry name" value="RNaseH-like_sf"/>
</dbReference>
<dbReference type="InterPro" id="IPR036397">
    <property type="entry name" value="RNaseH_sf"/>
</dbReference>
<dbReference type="InterPro" id="IPR000504">
    <property type="entry name" value="RRM_dom"/>
</dbReference>
<dbReference type="PANTHER" id="PTHR13976">
    <property type="entry name" value="HETEROGENEOUS NUCLEAR RIBONUCLEOPROTEIN-RELATED"/>
    <property type="match status" value="1"/>
</dbReference>
<dbReference type="SMART" id="SM00360">
    <property type="entry name" value="RRM"/>
    <property type="match status" value="3"/>
</dbReference>
<dbReference type="SUPFAM" id="SSF53098">
    <property type="entry name" value="Ribonuclease H-like"/>
    <property type="match status" value="1"/>
</dbReference>
<dbReference type="SUPFAM" id="SSF54928">
    <property type="entry name" value="RNA-binding domain, RBD"/>
    <property type="match status" value="2"/>
</dbReference>
<dbReference type="PROSITE" id="PS50102">
    <property type="entry name" value="RRM"/>
    <property type="match status" value="2"/>
</dbReference>
<sequence>MTASHSDSLVVLFGATAGAYGAKLGSDERELILLVWQVVDLPSKKVGTLHKSLVKADNLELSDQCREVSGLTAEGLGKAEPLDRVLQQFIQLVSSDLKVFGRNSYTLCSDGQLLIRQVLHPETSKKNFLLSDCFYSFYDLRKEFHTCYPSSAAVKDQTIKTMAEYLGLGTDEAEEDFGVWQVKTMVAIIFSMLSENCDHIFTDPETVKYKYETGPCSKSETVDSETVIRARGLPWQSSDQDIARFFKGLNIAKGGVALCLNAQGRRNGEALVRFVNSEQRDLALERHKHHMGSRYIEVYKATGEEFLKIAGGTSNEVAQFLSKENQVIIRMRGLPFTATQEDVLGFLGPECPVTGGKEGLLFVKYPDGRPTGDAFVLFSCEEYAQNALKKHKEILGKRYIELFRSTAAEVQQVLNRYMSTPLIPTLPTPIIPVIPPPYTIATGSIRDCVRLRGLPYTAGIDDILDFMGDATADIKPHGVHMVLNQQGRPSGDAFIQMKSADKAFMVAQKCHKKMMKDRYVEVFQCSGEEMNFVLMGGTLNRSGLSPPPCLSPPAYAAFQTAAVIPAEAALYQPQALLPTARTPQASAAAPPAVTYYPAQAAQLYMNYTAYYPSPPVSPTTVGYLAAPPGAVAAAATATHTPLLPQPGALVRMQGLPYNTGMKEILSFFQGYQYAPDDYNGLIQLSEQARSVLQAPKEWVCL</sequence>
<name>ESRP2_CHICK</name>
<gene>
    <name type="primary">ESRP2</name>
    <name type="synonym">RBM35B</name>
    <name type="ORF">RCJMB04_5c3</name>
</gene>